<evidence type="ECO:0000255" key="1">
    <source>
        <dbReference type="HAMAP-Rule" id="MF_00377"/>
    </source>
</evidence>
<keyword id="KW-0067">ATP-binding</keyword>
<keyword id="KW-0963">Cytoplasm</keyword>
<keyword id="KW-0235">DNA replication</keyword>
<keyword id="KW-0238">DNA-binding</keyword>
<keyword id="KW-0446">Lipid-binding</keyword>
<keyword id="KW-0547">Nucleotide-binding</keyword>
<keyword id="KW-1185">Reference proteome</keyword>
<sequence>MKTELSEVWQQCIDHLERHTSKTAIENWVRSTRPVAVVEDTIIVGVQGEFAKHRMESRYAPLLRQALRDLTKRNMQLKFVANPNVIEDPAAEPVDAPNVADLPAGTSAPAAEQNARLLGYINPKYTFETFVVGNSNRFAHAAALAVAETPARTYNPLFIYGGVGLGKTHLMHAIGHYVLQHNPTAKVAYVSTETFTNEFIMAIQKGSTTAFQNRYRKVDVLLIDDIQFLAGKEATQEEFYHTFNAIREANKQIVISSDRPPKEIPTLEDRLRSRFEWGLICDIQPPDLETRTAILRKKAQSEGIQVPDEVTNYIATNIETNIRELEGALTRVVAYANMLKCPLTYDLAVQALKDILPPVRPKQITIATIKQVVAEHYNIRMQDFEVRNRSRAVAYPRQIAMYLARELTDSSLPKIGEEFGGRDHTTVIHACEKIAKDIQSDPAFAHTIEQLIARIRAE</sequence>
<gene>
    <name evidence="1" type="primary">dnaA</name>
    <name type="ordered locus">STH1</name>
</gene>
<feature type="chain" id="PRO_0000114282" description="Chromosomal replication initiator protein DnaA">
    <location>
        <begin position="1"/>
        <end position="458"/>
    </location>
</feature>
<feature type="region of interest" description="Domain I, interacts with DnaA modulators" evidence="1">
    <location>
        <begin position="1"/>
        <end position="93"/>
    </location>
</feature>
<feature type="region of interest" description="Domain II" evidence="1">
    <location>
        <begin position="94"/>
        <end position="119"/>
    </location>
</feature>
<feature type="region of interest" description="Domain III, AAA+ region" evidence="1">
    <location>
        <begin position="120"/>
        <end position="336"/>
    </location>
</feature>
<feature type="region of interest" description="Domain IV, binds dsDNA" evidence="1">
    <location>
        <begin position="337"/>
        <end position="458"/>
    </location>
</feature>
<feature type="binding site" evidence="1">
    <location>
        <position position="164"/>
    </location>
    <ligand>
        <name>ATP</name>
        <dbReference type="ChEBI" id="CHEBI:30616"/>
    </ligand>
</feature>
<feature type="binding site" evidence="1">
    <location>
        <position position="166"/>
    </location>
    <ligand>
        <name>ATP</name>
        <dbReference type="ChEBI" id="CHEBI:30616"/>
    </ligand>
</feature>
<feature type="binding site" evidence="1">
    <location>
        <position position="167"/>
    </location>
    <ligand>
        <name>ATP</name>
        <dbReference type="ChEBI" id="CHEBI:30616"/>
    </ligand>
</feature>
<feature type="binding site" evidence="1">
    <location>
        <position position="168"/>
    </location>
    <ligand>
        <name>ATP</name>
        <dbReference type="ChEBI" id="CHEBI:30616"/>
    </ligand>
</feature>
<name>DNAA_SYMTH</name>
<comment type="function">
    <text evidence="1">Plays an essential role in the initiation and regulation of chromosomal replication. ATP-DnaA binds to the origin of replication (oriC) to initiate formation of the DNA replication initiation complex once per cell cycle. Binds the DnaA box (a 9 base pair repeat at the origin) and separates the double-stranded (ds)DNA. Forms a right-handed helical filament on oriC DNA; dsDNA binds to the exterior of the filament while single-stranded (ss)DNA is stabiized in the filament's interior. The ATP-DnaA-oriC complex binds and stabilizes one strand of the AT-rich DNA unwinding element (DUE), permitting loading of DNA polymerase. After initiation quickly degrades to an ADP-DnaA complex that is not apt for DNA replication. Binds acidic phospholipids.</text>
</comment>
<comment type="subunit">
    <text evidence="1">Oligomerizes as a right-handed, spiral filament on DNA at oriC.</text>
</comment>
<comment type="subcellular location">
    <subcellularLocation>
        <location evidence="1">Cytoplasm</location>
    </subcellularLocation>
</comment>
<comment type="domain">
    <text evidence="1">Domain I is involved in oligomerization and binding regulators, domain II is flexibile and of varying length in different bacteria, domain III forms the AAA+ region, while domain IV binds dsDNA.</text>
</comment>
<comment type="similarity">
    <text evidence="1">Belongs to the DnaA family.</text>
</comment>
<reference key="1">
    <citation type="journal article" date="2004" name="Nucleic Acids Res.">
        <title>Genome sequence of Symbiobacterium thermophilum, an uncultivable bacterium that depends on microbial commensalism.</title>
        <authorList>
            <person name="Ueda K."/>
            <person name="Yamashita A."/>
            <person name="Ishikawa J."/>
            <person name="Shimada M."/>
            <person name="Watsuji T."/>
            <person name="Morimura K."/>
            <person name="Ikeda H."/>
            <person name="Hattori M."/>
            <person name="Beppu T."/>
        </authorList>
    </citation>
    <scope>NUCLEOTIDE SEQUENCE [LARGE SCALE GENOMIC DNA]</scope>
    <source>
        <strain>DSM 24528 / JCM 14929 / IAM 14863 / T</strain>
    </source>
</reference>
<accession>Q67TK7</accession>
<protein>
    <recommendedName>
        <fullName evidence="1">Chromosomal replication initiator protein DnaA</fullName>
    </recommendedName>
</protein>
<proteinExistence type="inferred from homology"/>
<dbReference type="EMBL" id="AP006840">
    <property type="protein sequence ID" value="BAD38986.1"/>
    <property type="molecule type" value="Genomic_DNA"/>
</dbReference>
<dbReference type="RefSeq" id="WP_011194136.1">
    <property type="nucleotide sequence ID" value="NC_006177.1"/>
</dbReference>
<dbReference type="SMR" id="Q67TK7"/>
<dbReference type="STRING" id="292459.STH1"/>
<dbReference type="KEGG" id="sth:STH1"/>
<dbReference type="eggNOG" id="COG0593">
    <property type="taxonomic scope" value="Bacteria"/>
</dbReference>
<dbReference type="HOGENOM" id="CLU_026910_3_1_9"/>
<dbReference type="OrthoDB" id="9807019at2"/>
<dbReference type="Proteomes" id="UP000000417">
    <property type="component" value="Chromosome"/>
</dbReference>
<dbReference type="GO" id="GO:0005737">
    <property type="term" value="C:cytoplasm"/>
    <property type="evidence" value="ECO:0007669"/>
    <property type="project" value="UniProtKB-SubCell"/>
</dbReference>
<dbReference type="GO" id="GO:0005886">
    <property type="term" value="C:plasma membrane"/>
    <property type="evidence" value="ECO:0007669"/>
    <property type="project" value="TreeGrafter"/>
</dbReference>
<dbReference type="GO" id="GO:0005524">
    <property type="term" value="F:ATP binding"/>
    <property type="evidence" value="ECO:0007669"/>
    <property type="project" value="UniProtKB-UniRule"/>
</dbReference>
<dbReference type="GO" id="GO:0016887">
    <property type="term" value="F:ATP hydrolysis activity"/>
    <property type="evidence" value="ECO:0007669"/>
    <property type="project" value="InterPro"/>
</dbReference>
<dbReference type="GO" id="GO:0003688">
    <property type="term" value="F:DNA replication origin binding"/>
    <property type="evidence" value="ECO:0007669"/>
    <property type="project" value="UniProtKB-UniRule"/>
</dbReference>
<dbReference type="GO" id="GO:0008289">
    <property type="term" value="F:lipid binding"/>
    <property type="evidence" value="ECO:0007669"/>
    <property type="project" value="UniProtKB-KW"/>
</dbReference>
<dbReference type="GO" id="GO:0006270">
    <property type="term" value="P:DNA replication initiation"/>
    <property type="evidence" value="ECO:0007669"/>
    <property type="project" value="UniProtKB-UniRule"/>
</dbReference>
<dbReference type="GO" id="GO:0006275">
    <property type="term" value="P:regulation of DNA replication"/>
    <property type="evidence" value="ECO:0007669"/>
    <property type="project" value="UniProtKB-UniRule"/>
</dbReference>
<dbReference type="CDD" id="cd00009">
    <property type="entry name" value="AAA"/>
    <property type="match status" value="1"/>
</dbReference>
<dbReference type="CDD" id="cd06571">
    <property type="entry name" value="Bac_DnaA_C"/>
    <property type="match status" value="1"/>
</dbReference>
<dbReference type="FunFam" id="1.10.8.60:FF:000003">
    <property type="entry name" value="Chromosomal replication initiator protein DnaA"/>
    <property type="match status" value="1"/>
</dbReference>
<dbReference type="FunFam" id="3.40.50.300:FF:000150">
    <property type="entry name" value="Chromosomal replication initiator protein DnaA"/>
    <property type="match status" value="1"/>
</dbReference>
<dbReference type="Gene3D" id="1.10.1750.10">
    <property type="match status" value="1"/>
</dbReference>
<dbReference type="Gene3D" id="1.10.8.60">
    <property type="match status" value="1"/>
</dbReference>
<dbReference type="Gene3D" id="3.30.300.180">
    <property type="match status" value="1"/>
</dbReference>
<dbReference type="Gene3D" id="3.40.50.300">
    <property type="entry name" value="P-loop containing nucleotide triphosphate hydrolases"/>
    <property type="match status" value="1"/>
</dbReference>
<dbReference type="HAMAP" id="MF_00377">
    <property type="entry name" value="DnaA_bact"/>
    <property type="match status" value="1"/>
</dbReference>
<dbReference type="InterPro" id="IPR003593">
    <property type="entry name" value="AAA+_ATPase"/>
</dbReference>
<dbReference type="InterPro" id="IPR001957">
    <property type="entry name" value="Chromosome_initiator_DnaA"/>
</dbReference>
<dbReference type="InterPro" id="IPR020591">
    <property type="entry name" value="Chromosome_initiator_DnaA-like"/>
</dbReference>
<dbReference type="InterPro" id="IPR018312">
    <property type="entry name" value="Chromosome_initiator_DnaA_CS"/>
</dbReference>
<dbReference type="InterPro" id="IPR013159">
    <property type="entry name" value="DnaA_C"/>
</dbReference>
<dbReference type="InterPro" id="IPR013317">
    <property type="entry name" value="DnaA_dom"/>
</dbReference>
<dbReference type="InterPro" id="IPR024633">
    <property type="entry name" value="DnaA_N_dom"/>
</dbReference>
<dbReference type="InterPro" id="IPR038454">
    <property type="entry name" value="DnaA_N_sf"/>
</dbReference>
<dbReference type="InterPro" id="IPR027417">
    <property type="entry name" value="P-loop_NTPase"/>
</dbReference>
<dbReference type="InterPro" id="IPR010921">
    <property type="entry name" value="Trp_repressor/repl_initiator"/>
</dbReference>
<dbReference type="NCBIfam" id="TIGR00362">
    <property type="entry name" value="DnaA"/>
    <property type="match status" value="1"/>
</dbReference>
<dbReference type="NCBIfam" id="NF010686">
    <property type="entry name" value="PRK14086.1"/>
    <property type="match status" value="1"/>
</dbReference>
<dbReference type="PANTHER" id="PTHR30050">
    <property type="entry name" value="CHROMOSOMAL REPLICATION INITIATOR PROTEIN DNAA"/>
    <property type="match status" value="1"/>
</dbReference>
<dbReference type="PANTHER" id="PTHR30050:SF2">
    <property type="entry name" value="CHROMOSOMAL REPLICATION INITIATOR PROTEIN DNAA"/>
    <property type="match status" value="1"/>
</dbReference>
<dbReference type="Pfam" id="PF00308">
    <property type="entry name" value="Bac_DnaA"/>
    <property type="match status" value="1"/>
</dbReference>
<dbReference type="Pfam" id="PF08299">
    <property type="entry name" value="Bac_DnaA_C"/>
    <property type="match status" value="1"/>
</dbReference>
<dbReference type="Pfam" id="PF11638">
    <property type="entry name" value="DnaA_N"/>
    <property type="match status" value="1"/>
</dbReference>
<dbReference type="PRINTS" id="PR00051">
    <property type="entry name" value="DNAA"/>
</dbReference>
<dbReference type="SMART" id="SM00382">
    <property type="entry name" value="AAA"/>
    <property type="match status" value="1"/>
</dbReference>
<dbReference type="SMART" id="SM00760">
    <property type="entry name" value="Bac_DnaA_C"/>
    <property type="match status" value="1"/>
</dbReference>
<dbReference type="SUPFAM" id="SSF52540">
    <property type="entry name" value="P-loop containing nucleoside triphosphate hydrolases"/>
    <property type="match status" value="1"/>
</dbReference>
<dbReference type="SUPFAM" id="SSF48295">
    <property type="entry name" value="TrpR-like"/>
    <property type="match status" value="1"/>
</dbReference>
<dbReference type="PROSITE" id="PS01008">
    <property type="entry name" value="DNAA"/>
    <property type="match status" value="1"/>
</dbReference>
<organism>
    <name type="scientific">Symbiobacterium thermophilum (strain DSM 24528 / JCM 14929 / IAM 14863 / T)</name>
    <dbReference type="NCBI Taxonomy" id="292459"/>
    <lineage>
        <taxon>Bacteria</taxon>
        <taxon>Bacillati</taxon>
        <taxon>Bacillota</taxon>
        <taxon>Clostridia</taxon>
        <taxon>Eubacteriales</taxon>
        <taxon>Symbiobacteriaceae</taxon>
        <taxon>Symbiobacterium</taxon>
    </lineage>
</organism>